<organism>
    <name type="scientific">Clostridium botulinum (strain Eklund 17B / Type B)</name>
    <dbReference type="NCBI Taxonomy" id="935198"/>
    <lineage>
        <taxon>Bacteria</taxon>
        <taxon>Bacillati</taxon>
        <taxon>Bacillota</taxon>
        <taxon>Clostridia</taxon>
        <taxon>Eubacteriales</taxon>
        <taxon>Clostridiaceae</taxon>
        <taxon>Clostridium</taxon>
    </lineage>
</organism>
<keyword id="KW-0687">Ribonucleoprotein</keyword>
<keyword id="KW-0689">Ribosomal protein</keyword>
<accession>B2TIL0</accession>
<sequence>MKSYIAKAQEVERKWYVVDAAGKPLGRVASQVASILRGKNKPTFTPNVDCGDFVIVINAEEVALTGKKLDQKMLRKHSFYPGGLKETPYREVLAKKPEFAFEEAVRRMLPKGVLGRQMLKKLKVYRGAEHDHAAQKPEVLELKY</sequence>
<reference key="1">
    <citation type="submission" date="2008-04" db="EMBL/GenBank/DDBJ databases">
        <title>Complete sequence of Clostridium botulinum strain Eklund.</title>
        <authorList>
            <person name="Brinkac L.M."/>
            <person name="Brown J.L."/>
            <person name="Bruce D."/>
            <person name="Detter C."/>
            <person name="Munk C."/>
            <person name="Smith L.A."/>
            <person name="Smith T.J."/>
            <person name="Sutton G."/>
            <person name="Brettin T.S."/>
        </authorList>
    </citation>
    <scope>NUCLEOTIDE SEQUENCE [LARGE SCALE GENOMIC DNA]</scope>
    <source>
        <strain>Eklund 17B / Type B</strain>
    </source>
</reference>
<proteinExistence type="inferred from homology"/>
<comment type="function">
    <text evidence="1">This protein is one of the early assembly proteins of the 50S ribosomal subunit, although it is not seen to bind rRNA by itself. It is important during the early stages of 50S assembly.</text>
</comment>
<comment type="subunit">
    <text evidence="1">Part of the 50S ribosomal subunit.</text>
</comment>
<comment type="similarity">
    <text evidence="1">Belongs to the universal ribosomal protein uL13 family.</text>
</comment>
<feature type="chain" id="PRO_1000144109" description="Large ribosomal subunit protein uL13">
    <location>
        <begin position="1"/>
        <end position="144"/>
    </location>
</feature>
<evidence type="ECO:0000255" key="1">
    <source>
        <dbReference type="HAMAP-Rule" id="MF_01366"/>
    </source>
</evidence>
<evidence type="ECO:0000305" key="2"/>
<gene>
    <name evidence="1" type="primary">rplM</name>
    <name type="ordered locus">CLL_A0273</name>
</gene>
<protein>
    <recommendedName>
        <fullName evidence="1">Large ribosomal subunit protein uL13</fullName>
    </recommendedName>
    <alternativeName>
        <fullName evidence="2">50S ribosomal protein L13</fullName>
    </alternativeName>
</protein>
<dbReference type="EMBL" id="CP001056">
    <property type="protein sequence ID" value="ACD22052.1"/>
    <property type="molecule type" value="Genomic_DNA"/>
</dbReference>
<dbReference type="SMR" id="B2TIL0"/>
<dbReference type="KEGG" id="cbk:CLL_A0273"/>
<dbReference type="PATRIC" id="fig|935198.13.peg.248"/>
<dbReference type="HOGENOM" id="CLU_082184_2_2_9"/>
<dbReference type="Proteomes" id="UP000001195">
    <property type="component" value="Chromosome"/>
</dbReference>
<dbReference type="GO" id="GO:0022625">
    <property type="term" value="C:cytosolic large ribosomal subunit"/>
    <property type="evidence" value="ECO:0007669"/>
    <property type="project" value="TreeGrafter"/>
</dbReference>
<dbReference type="GO" id="GO:0003729">
    <property type="term" value="F:mRNA binding"/>
    <property type="evidence" value="ECO:0007669"/>
    <property type="project" value="TreeGrafter"/>
</dbReference>
<dbReference type="GO" id="GO:0003735">
    <property type="term" value="F:structural constituent of ribosome"/>
    <property type="evidence" value="ECO:0007669"/>
    <property type="project" value="InterPro"/>
</dbReference>
<dbReference type="GO" id="GO:0017148">
    <property type="term" value="P:negative regulation of translation"/>
    <property type="evidence" value="ECO:0007669"/>
    <property type="project" value="TreeGrafter"/>
</dbReference>
<dbReference type="GO" id="GO:0006412">
    <property type="term" value="P:translation"/>
    <property type="evidence" value="ECO:0007669"/>
    <property type="project" value="UniProtKB-UniRule"/>
</dbReference>
<dbReference type="CDD" id="cd00392">
    <property type="entry name" value="Ribosomal_L13"/>
    <property type="match status" value="1"/>
</dbReference>
<dbReference type="FunFam" id="3.90.1180.10:FF:000001">
    <property type="entry name" value="50S ribosomal protein L13"/>
    <property type="match status" value="1"/>
</dbReference>
<dbReference type="Gene3D" id="3.90.1180.10">
    <property type="entry name" value="Ribosomal protein L13"/>
    <property type="match status" value="1"/>
</dbReference>
<dbReference type="HAMAP" id="MF_01366">
    <property type="entry name" value="Ribosomal_uL13"/>
    <property type="match status" value="1"/>
</dbReference>
<dbReference type="InterPro" id="IPR005822">
    <property type="entry name" value="Ribosomal_uL13"/>
</dbReference>
<dbReference type="InterPro" id="IPR005823">
    <property type="entry name" value="Ribosomal_uL13_bac-type"/>
</dbReference>
<dbReference type="InterPro" id="IPR023563">
    <property type="entry name" value="Ribosomal_uL13_CS"/>
</dbReference>
<dbReference type="InterPro" id="IPR036899">
    <property type="entry name" value="Ribosomal_uL13_sf"/>
</dbReference>
<dbReference type="NCBIfam" id="TIGR01066">
    <property type="entry name" value="rplM_bact"/>
    <property type="match status" value="1"/>
</dbReference>
<dbReference type="PANTHER" id="PTHR11545:SF2">
    <property type="entry name" value="LARGE RIBOSOMAL SUBUNIT PROTEIN UL13M"/>
    <property type="match status" value="1"/>
</dbReference>
<dbReference type="PANTHER" id="PTHR11545">
    <property type="entry name" value="RIBOSOMAL PROTEIN L13"/>
    <property type="match status" value="1"/>
</dbReference>
<dbReference type="Pfam" id="PF00572">
    <property type="entry name" value="Ribosomal_L13"/>
    <property type="match status" value="1"/>
</dbReference>
<dbReference type="PIRSF" id="PIRSF002181">
    <property type="entry name" value="Ribosomal_L13"/>
    <property type="match status" value="1"/>
</dbReference>
<dbReference type="SUPFAM" id="SSF52161">
    <property type="entry name" value="Ribosomal protein L13"/>
    <property type="match status" value="1"/>
</dbReference>
<dbReference type="PROSITE" id="PS00783">
    <property type="entry name" value="RIBOSOMAL_L13"/>
    <property type="match status" value="1"/>
</dbReference>
<name>RL13_CLOBB</name>